<dbReference type="EC" id="2.5.1.15"/>
<dbReference type="EMBL" id="BA000034">
    <property type="protein sequence ID" value="BAC64055.1"/>
    <property type="molecule type" value="Genomic_DNA"/>
</dbReference>
<dbReference type="RefSeq" id="WP_011054468.1">
    <property type="nucleotide sequence ID" value="NC_004606.1"/>
</dbReference>
<dbReference type="SMR" id="P0DB09"/>
<dbReference type="KEGG" id="sps:SPs0960"/>
<dbReference type="HOGENOM" id="CLU_008023_0_2_9"/>
<dbReference type="UniPathway" id="UPA00077">
    <property type="reaction ID" value="UER00156"/>
</dbReference>
<dbReference type="GO" id="GO:0005829">
    <property type="term" value="C:cytosol"/>
    <property type="evidence" value="ECO:0007669"/>
    <property type="project" value="TreeGrafter"/>
</dbReference>
<dbReference type="GO" id="GO:0004156">
    <property type="term" value="F:dihydropteroate synthase activity"/>
    <property type="evidence" value="ECO:0007669"/>
    <property type="project" value="UniProtKB-EC"/>
</dbReference>
<dbReference type="GO" id="GO:0046872">
    <property type="term" value="F:metal ion binding"/>
    <property type="evidence" value="ECO:0007669"/>
    <property type="project" value="UniProtKB-KW"/>
</dbReference>
<dbReference type="GO" id="GO:0046656">
    <property type="term" value="P:folic acid biosynthetic process"/>
    <property type="evidence" value="ECO:0007669"/>
    <property type="project" value="UniProtKB-KW"/>
</dbReference>
<dbReference type="GO" id="GO:0046654">
    <property type="term" value="P:tetrahydrofolate biosynthetic process"/>
    <property type="evidence" value="ECO:0007669"/>
    <property type="project" value="UniProtKB-UniPathway"/>
</dbReference>
<dbReference type="CDD" id="cd00739">
    <property type="entry name" value="DHPS"/>
    <property type="match status" value="1"/>
</dbReference>
<dbReference type="FunFam" id="3.20.20.20:FF:000006">
    <property type="entry name" value="Dihydropteroate synthase"/>
    <property type="match status" value="1"/>
</dbReference>
<dbReference type="Gene3D" id="3.20.20.20">
    <property type="entry name" value="Dihydropteroate synthase-like"/>
    <property type="match status" value="1"/>
</dbReference>
<dbReference type="InterPro" id="IPR045031">
    <property type="entry name" value="DHP_synth-like"/>
</dbReference>
<dbReference type="InterPro" id="IPR006390">
    <property type="entry name" value="DHP_synth_dom"/>
</dbReference>
<dbReference type="InterPro" id="IPR011005">
    <property type="entry name" value="Dihydropteroate_synth-like_sf"/>
</dbReference>
<dbReference type="InterPro" id="IPR000489">
    <property type="entry name" value="Pterin-binding_dom"/>
</dbReference>
<dbReference type="NCBIfam" id="TIGR01496">
    <property type="entry name" value="DHPS"/>
    <property type="match status" value="1"/>
</dbReference>
<dbReference type="PANTHER" id="PTHR20941">
    <property type="entry name" value="FOLATE SYNTHESIS PROTEINS"/>
    <property type="match status" value="1"/>
</dbReference>
<dbReference type="PANTHER" id="PTHR20941:SF1">
    <property type="entry name" value="FOLIC ACID SYNTHESIS PROTEIN FOL1"/>
    <property type="match status" value="1"/>
</dbReference>
<dbReference type="Pfam" id="PF00809">
    <property type="entry name" value="Pterin_bind"/>
    <property type="match status" value="1"/>
</dbReference>
<dbReference type="SUPFAM" id="SSF51717">
    <property type="entry name" value="Dihydropteroate synthetase-like"/>
    <property type="match status" value="1"/>
</dbReference>
<dbReference type="PROSITE" id="PS00792">
    <property type="entry name" value="DHPS_1"/>
    <property type="match status" value="1"/>
</dbReference>
<dbReference type="PROSITE" id="PS00793">
    <property type="entry name" value="DHPS_2"/>
    <property type="match status" value="1"/>
</dbReference>
<dbReference type="PROSITE" id="PS50972">
    <property type="entry name" value="PTERIN_BINDING"/>
    <property type="match status" value="1"/>
</dbReference>
<sequence length="266" mass="28755">MKIGKFVIEGNAAIMGILNVTPDSFSDGGSYTTVQKALDHVEQMIADGAKIIDVGGESTRPGCQFVSATDEIDRVVPVIKAIKENYDILISIDTYKTETARAALEAGADILNDVWAGLYDGQMFALAAEYDAPIILMHNQDEEVYQEVTQDVCDFLGNRAQAALDAGVPKNNIWIDPGFGFAKSVQQNTELLKRLDRVCQLGYPVLFGISRKRVVDALLGGNTKAKERDGATAALSAYALGKGCQIVRVHDVKANQDIVAVLSQLM</sequence>
<name>DHPS_STRPQ</name>
<protein>
    <recommendedName>
        <fullName>Dihydropteroate synthase</fullName>
        <shortName>DHPS</shortName>
        <ecNumber>2.5.1.15</ecNumber>
    </recommendedName>
    <alternativeName>
        <fullName>Dihydropteroate pyrophosphorylase</fullName>
    </alternativeName>
</protein>
<gene>
    <name type="primary">folP</name>
    <name type="ordered locus">SPs0960</name>
</gene>
<evidence type="ECO:0000250" key="1"/>
<evidence type="ECO:0000250" key="2">
    <source>
        <dbReference type="UniProtKB" id="P0AC13"/>
    </source>
</evidence>
<evidence type="ECO:0000250" key="3">
    <source>
        <dbReference type="UniProtKB" id="P9WND1"/>
    </source>
</evidence>
<evidence type="ECO:0000255" key="4">
    <source>
        <dbReference type="PROSITE-ProRule" id="PRU00334"/>
    </source>
</evidence>
<evidence type="ECO:0000305" key="5"/>
<comment type="function">
    <text evidence="2">Catalyzes the condensation of para-aminobenzoate (pABA) with 6-hydroxymethyl-7,8-dihydropterin diphosphate (DHPt-PP) to form 7,8-dihydropteroate (H2Pte), the immediate precursor of folate derivatives.</text>
</comment>
<comment type="catalytic activity">
    <reaction evidence="2">
        <text>(7,8-dihydropterin-6-yl)methyl diphosphate + 4-aminobenzoate = 7,8-dihydropteroate + diphosphate</text>
        <dbReference type="Rhea" id="RHEA:19949"/>
        <dbReference type="ChEBI" id="CHEBI:17836"/>
        <dbReference type="ChEBI" id="CHEBI:17839"/>
        <dbReference type="ChEBI" id="CHEBI:33019"/>
        <dbReference type="ChEBI" id="CHEBI:72950"/>
        <dbReference type="EC" id="2.5.1.15"/>
    </reaction>
</comment>
<comment type="cofactor">
    <cofactor evidence="2">
        <name>Mg(2+)</name>
        <dbReference type="ChEBI" id="CHEBI:18420"/>
    </cofactor>
</comment>
<comment type="pathway">
    <text>Cofactor biosynthesis; tetrahydrofolate biosynthesis; 7,8-dihydrofolate from 2-amino-4-hydroxy-6-hydroxymethyl-7,8-dihydropteridine diphosphate and 4-aminobenzoate: step 1/2.</text>
</comment>
<comment type="subunit">
    <text evidence="1">Homodimer or homotrimer.</text>
</comment>
<comment type="similarity">
    <text evidence="5">Belongs to the DHPS family.</text>
</comment>
<organism>
    <name type="scientific">Streptococcus pyogenes serotype M3 (strain SSI-1)</name>
    <dbReference type="NCBI Taxonomy" id="193567"/>
    <lineage>
        <taxon>Bacteria</taxon>
        <taxon>Bacillati</taxon>
        <taxon>Bacillota</taxon>
        <taxon>Bacilli</taxon>
        <taxon>Lactobacillales</taxon>
        <taxon>Streptococcaceae</taxon>
        <taxon>Streptococcus</taxon>
    </lineage>
</organism>
<keyword id="KW-0289">Folate biosynthesis</keyword>
<keyword id="KW-0460">Magnesium</keyword>
<keyword id="KW-0479">Metal-binding</keyword>
<keyword id="KW-0808">Transferase</keyword>
<reference key="1">
    <citation type="journal article" date="2003" name="Genome Res.">
        <title>Genome sequence of an M3 strain of Streptococcus pyogenes reveals a large-scale genomic rearrangement in invasive strains and new insights into phage evolution.</title>
        <authorList>
            <person name="Nakagawa I."/>
            <person name="Kurokawa K."/>
            <person name="Yamashita A."/>
            <person name="Nakata M."/>
            <person name="Tomiyasu Y."/>
            <person name="Okahashi N."/>
            <person name="Kawabata S."/>
            <person name="Yamazaki K."/>
            <person name="Shiba T."/>
            <person name="Yasunaga T."/>
            <person name="Hayashi H."/>
            <person name="Hattori M."/>
            <person name="Hamada S."/>
        </authorList>
    </citation>
    <scope>NUCLEOTIDE SEQUENCE [LARGE SCALE GENOMIC DNA]</scope>
    <source>
        <strain>SSI-1</strain>
    </source>
</reference>
<feature type="chain" id="PRO_0000411342" description="Dihydropteroate synthase">
    <location>
        <begin position="1"/>
        <end position="266"/>
    </location>
</feature>
<feature type="domain" description="Pterin-binding" evidence="4">
    <location>
        <begin position="12"/>
        <end position="260"/>
    </location>
</feature>
<feature type="binding site" evidence="3">
    <location>
        <position position="19"/>
    </location>
    <ligand>
        <name>Mg(2+)</name>
        <dbReference type="ChEBI" id="CHEBI:18420"/>
    </ligand>
</feature>
<feature type="binding site" evidence="2">
    <location>
        <position position="59"/>
    </location>
    <ligand>
        <name>(7,8-dihydropterin-6-yl)methyl diphosphate</name>
        <dbReference type="ChEBI" id="CHEBI:72950"/>
    </ligand>
</feature>
<feature type="binding site" evidence="2">
    <location>
        <position position="93"/>
    </location>
    <ligand>
        <name>(7,8-dihydropterin-6-yl)methyl diphosphate</name>
        <dbReference type="ChEBI" id="CHEBI:72950"/>
    </ligand>
</feature>
<feature type="binding site" evidence="2">
    <location>
        <position position="112"/>
    </location>
    <ligand>
        <name>(7,8-dihydropterin-6-yl)methyl diphosphate</name>
        <dbReference type="ChEBI" id="CHEBI:72950"/>
    </ligand>
</feature>
<feature type="binding site" evidence="2">
    <location>
        <position position="176"/>
    </location>
    <ligand>
        <name>(7,8-dihydropterin-6-yl)methyl diphosphate</name>
        <dbReference type="ChEBI" id="CHEBI:72950"/>
    </ligand>
</feature>
<feature type="binding site" evidence="2">
    <location>
        <position position="212"/>
    </location>
    <ligand>
        <name>(7,8-dihydropterin-6-yl)methyl diphosphate</name>
        <dbReference type="ChEBI" id="CHEBI:72950"/>
    </ligand>
</feature>
<feature type="binding site" evidence="2">
    <location>
        <begin position="248"/>
        <end position="250"/>
    </location>
    <ligand>
        <name>(7,8-dihydropterin-6-yl)methyl diphosphate</name>
        <dbReference type="ChEBI" id="CHEBI:72950"/>
    </ligand>
</feature>
<accession>P0DB09</accession>
<accession>Q8K7K8</accession>
<proteinExistence type="inferred from homology"/>